<proteinExistence type="evidence at protein level"/>
<gene>
    <name type="primary">ssb1</name>
    <name type="ordered locus">SCO2683</name>
    <name type="ORF">SCC61A.04c</name>
</gene>
<comment type="subunit">
    <text evidence="1">Homotetramer.</text>
</comment>
<protein>
    <recommendedName>
        <fullName evidence="1">Single-stranded DNA-binding protein 1</fullName>
        <shortName evidence="1">SSB 1</shortName>
    </recommendedName>
</protein>
<dbReference type="EMBL" id="AL939113">
    <property type="protein sequence ID" value="CAB92249.1"/>
    <property type="molecule type" value="Genomic_DNA"/>
</dbReference>
<dbReference type="RefSeq" id="NP_626917.1">
    <property type="nucleotide sequence ID" value="NC_003888.3"/>
</dbReference>
<dbReference type="RefSeq" id="WP_003976116.1">
    <property type="nucleotide sequence ID" value="NZ_VNID01000020.1"/>
</dbReference>
<dbReference type="PDB" id="4DAM">
    <property type="method" value="X-ray"/>
    <property type="resolution" value="1.70 A"/>
    <property type="chains" value="A/B/C/D/E/F/G/H/I/J/K/L=1-116"/>
</dbReference>
<dbReference type="PDBsum" id="4DAM"/>
<dbReference type="SMR" id="Q9KYI9"/>
<dbReference type="STRING" id="100226.gene:17760289"/>
<dbReference type="PaxDb" id="100226-SCO2683"/>
<dbReference type="KEGG" id="sco:SCO2683"/>
<dbReference type="PATRIC" id="fig|100226.15.peg.2739"/>
<dbReference type="eggNOG" id="COG0629">
    <property type="taxonomic scope" value="Bacteria"/>
</dbReference>
<dbReference type="HOGENOM" id="CLU_078758_1_3_11"/>
<dbReference type="InParanoid" id="Q9KYI9"/>
<dbReference type="OrthoDB" id="4427276at2"/>
<dbReference type="PhylomeDB" id="Q9KYI9"/>
<dbReference type="EvolutionaryTrace" id="Q9KYI9"/>
<dbReference type="Proteomes" id="UP000001973">
    <property type="component" value="Chromosome"/>
</dbReference>
<dbReference type="GO" id="GO:0009295">
    <property type="term" value="C:nucleoid"/>
    <property type="evidence" value="ECO:0000318"/>
    <property type="project" value="GO_Central"/>
</dbReference>
<dbReference type="GO" id="GO:0008047">
    <property type="term" value="F:enzyme activator activity"/>
    <property type="evidence" value="ECO:0000318"/>
    <property type="project" value="GO_Central"/>
</dbReference>
<dbReference type="GO" id="GO:0003697">
    <property type="term" value="F:single-stranded DNA binding"/>
    <property type="evidence" value="ECO:0000318"/>
    <property type="project" value="GO_Central"/>
</dbReference>
<dbReference type="GO" id="GO:0006260">
    <property type="term" value="P:DNA replication"/>
    <property type="evidence" value="ECO:0000318"/>
    <property type="project" value="GO_Central"/>
</dbReference>
<dbReference type="CDD" id="cd04496">
    <property type="entry name" value="SSB_OBF"/>
    <property type="match status" value="1"/>
</dbReference>
<dbReference type="FunFam" id="2.40.50.140:FF:000414">
    <property type="entry name" value="Single-stranded DNA-binding protein 1"/>
    <property type="match status" value="1"/>
</dbReference>
<dbReference type="Gene3D" id="2.40.50.140">
    <property type="entry name" value="Nucleic acid-binding proteins"/>
    <property type="match status" value="1"/>
</dbReference>
<dbReference type="HAMAP" id="MF_00984">
    <property type="entry name" value="SSB"/>
    <property type="match status" value="1"/>
</dbReference>
<dbReference type="InterPro" id="IPR012340">
    <property type="entry name" value="NA-bd_OB-fold"/>
</dbReference>
<dbReference type="InterPro" id="IPR000424">
    <property type="entry name" value="Primosome_PriB/ssb"/>
</dbReference>
<dbReference type="InterPro" id="IPR011344">
    <property type="entry name" value="ssDNA-bd"/>
</dbReference>
<dbReference type="Pfam" id="PF00436">
    <property type="entry name" value="SSB"/>
    <property type="match status" value="1"/>
</dbReference>
<dbReference type="SUPFAM" id="SSF50249">
    <property type="entry name" value="Nucleic acid-binding proteins"/>
    <property type="match status" value="1"/>
</dbReference>
<dbReference type="PROSITE" id="PS50935">
    <property type="entry name" value="SSB"/>
    <property type="match status" value="1"/>
</dbReference>
<reference key="1">
    <citation type="journal article" date="2002" name="Nature">
        <title>Complete genome sequence of the model actinomycete Streptomyces coelicolor A3(2).</title>
        <authorList>
            <person name="Bentley S.D."/>
            <person name="Chater K.F."/>
            <person name="Cerdeno-Tarraga A.-M."/>
            <person name="Challis G.L."/>
            <person name="Thomson N.R."/>
            <person name="James K.D."/>
            <person name="Harris D.E."/>
            <person name="Quail M.A."/>
            <person name="Kieser H."/>
            <person name="Harper D."/>
            <person name="Bateman A."/>
            <person name="Brown S."/>
            <person name="Chandra G."/>
            <person name="Chen C.W."/>
            <person name="Collins M."/>
            <person name="Cronin A."/>
            <person name="Fraser A."/>
            <person name="Goble A."/>
            <person name="Hidalgo J."/>
            <person name="Hornsby T."/>
            <person name="Howarth S."/>
            <person name="Huang C.-H."/>
            <person name="Kieser T."/>
            <person name="Larke L."/>
            <person name="Murphy L.D."/>
            <person name="Oliver K."/>
            <person name="O'Neil S."/>
            <person name="Rabbinowitsch E."/>
            <person name="Rajandream M.A."/>
            <person name="Rutherford K.M."/>
            <person name="Rutter S."/>
            <person name="Seeger K."/>
            <person name="Saunders D."/>
            <person name="Sharp S."/>
            <person name="Squares R."/>
            <person name="Squares S."/>
            <person name="Taylor K."/>
            <person name="Warren T."/>
            <person name="Wietzorrek A."/>
            <person name="Woodward J.R."/>
            <person name="Barrell B.G."/>
            <person name="Parkhill J."/>
            <person name="Hopwood D.A."/>
        </authorList>
    </citation>
    <scope>NUCLEOTIDE SEQUENCE [LARGE SCALE GENOMIC DNA]</scope>
    <source>
        <strain>ATCC BAA-471 / A3(2) / M145</strain>
    </source>
</reference>
<accession>Q9KYI9</accession>
<feature type="chain" id="PRO_0000096115" description="Single-stranded DNA-binding protein 1">
    <location>
        <begin position="1"/>
        <end position="156"/>
    </location>
</feature>
<feature type="domain" description="SSB" evidence="1">
    <location>
        <begin position="1"/>
        <end position="107"/>
    </location>
</feature>
<feature type="region of interest" description="Disordered" evidence="2">
    <location>
        <begin position="114"/>
        <end position="156"/>
    </location>
</feature>
<feature type="compositionally biased region" description="Low complexity" evidence="2">
    <location>
        <begin position="114"/>
        <end position="124"/>
    </location>
</feature>
<feature type="strand" evidence="3">
    <location>
        <begin position="5"/>
        <end position="12"/>
    </location>
</feature>
<feature type="strand" evidence="3">
    <location>
        <begin position="17"/>
        <end position="21"/>
    </location>
</feature>
<feature type="strand" evidence="3">
    <location>
        <begin position="24"/>
        <end position="39"/>
    </location>
</feature>
<feature type="turn" evidence="3">
    <location>
        <begin position="40"/>
        <end position="43"/>
    </location>
</feature>
<feature type="strand" evidence="3">
    <location>
        <begin position="44"/>
        <end position="58"/>
    </location>
</feature>
<feature type="helix" evidence="3">
    <location>
        <begin position="59"/>
        <end position="68"/>
    </location>
</feature>
<feature type="strand" evidence="3">
    <location>
        <begin position="74"/>
        <end position="88"/>
    </location>
</feature>
<feature type="strand" evidence="3">
    <location>
        <begin position="91"/>
        <end position="105"/>
    </location>
</feature>
<organism>
    <name type="scientific">Streptomyces coelicolor (strain ATCC BAA-471 / A3(2) / M145)</name>
    <dbReference type="NCBI Taxonomy" id="100226"/>
    <lineage>
        <taxon>Bacteria</taxon>
        <taxon>Bacillati</taxon>
        <taxon>Actinomycetota</taxon>
        <taxon>Actinomycetes</taxon>
        <taxon>Kitasatosporales</taxon>
        <taxon>Streptomycetaceae</taxon>
        <taxon>Streptomyces</taxon>
        <taxon>Streptomyces albidoflavus group</taxon>
    </lineage>
</organism>
<evidence type="ECO:0000255" key="1">
    <source>
        <dbReference type="HAMAP-Rule" id="MF_00984"/>
    </source>
</evidence>
<evidence type="ECO:0000256" key="2">
    <source>
        <dbReference type="SAM" id="MobiDB-lite"/>
    </source>
</evidence>
<evidence type="ECO:0007829" key="3">
    <source>
        <dbReference type="PDB" id="4DAM"/>
    </source>
</evidence>
<keyword id="KW-0002">3D-structure</keyword>
<keyword id="KW-0238">DNA-binding</keyword>
<keyword id="KW-1185">Reference proteome</keyword>
<sequence>MNETMICAVGNVATTPVFRDLANGPSVRFRLAVTARYWDREKNAWTDGHTNFFTVWANRQLATNASGSLAVGDPVVVQGRLKVRTDVREGQSRTSADIDAVAIGHDLARGTAAFRRTARTEASTSPPRPEPNWEVPAGGTPGEPVPEQRPDPVPVG</sequence>
<name>SSB1_STRCO</name>